<organism>
    <name type="scientific">Pseudarthrobacter chlorophenolicus (strain ATCC 700700 / DSM 12829 / CIP 107037 / JCM 12360 / KCTC 9906 / NCIMB 13794 / A6)</name>
    <name type="common">Arthrobacter chlorophenolicus</name>
    <dbReference type="NCBI Taxonomy" id="452863"/>
    <lineage>
        <taxon>Bacteria</taxon>
        <taxon>Bacillati</taxon>
        <taxon>Actinomycetota</taxon>
        <taxon>Actinomycetes</taxon>
        <taxon>Micrococcales</taxon>
        <taxon>Micrococcaceae</taxon>
        <taxon>Pseudarthrobacter</taxon>
    </lineage>
</organism>
<protein>
    <recommendedName>
        <fullName evidence="1">Imidazole glycerol phosphate synthase subunit HisF</fullName>
        <ecNumber evidence="1">4.3.2.10</ecNumber>
    </recommendedName>
    <alternativeName>
        <fullName evidence="1">IGP synthase cyclase subunit</fullName>
    </alternativeName>
    <alternativeName>
        <fullName evidence="1">IGP synthase subunit HisF</fullName>
    </alternativeName>
    <alternativeName>
        <fullName evidence="1">ImGP synthase subunit HisF</fullName>
        <shortName evidence="1">IGPS subunit HisF</shortName>
    </alternativeName>
</protein>
<dbReference type="EC" id="4.3.2.10" evidence="1"/>
<dbReference type="EMBL" id="CP001341">
    <property type="protein sequence ID" value="ACL39663.1"/>
    <property type="molecule type" value="Genomic_DNA"/>
</dbReference>
<dbReference type="RefSeq" id="WP_015936883.1">
    <property type="nucleotide sequence ID" value="NC_011886.1"/>
</dbReference>
<dbReference type="SMR" id="B8H6U2"/>
<dbReference type="STRING" id="452863.Achl_1676"/>
<dbReference type="KEGG" id="ach:Achl_1676"/>
<dbReference type="eggNOG" id="COG0107">
    <property type="taxonomic scope" value="Bacteria"/>
</dbReference>
<dbReference type="HOGENOM" id="CLU_048577_4_0_11"/>
<dbReference type="OrthoDB" id="9781903at2"/>
<dbReference type="UniPathway" id="UPA00031">
    <property type="reaction ID" value="UER00010"/>
</dbReference>
<dbReference type="Proteomes" id="UP000002505">
    <property type="component" value="Chromosome"/>
</dbReference>
<dbReference type="GO" id="GO:0005737">
    <property type="term" value="C:cytoplasm"/>
    <property type="evidence" value="ECO:0007669"/>
    <property type="project" value="UniProtKB-SubCell"/>
</dbReference>
<dbReference type="GO" id="GO:0000107">
    <property type="term" value="F:imidazoleglycerol-phosphate synthase activity"/>
    <property type="evidence" value="ECO:0007669"/>
    <property type="project" value="UniProtKB-UniRule"/>
</dbReference>
<dbReference type="GO" id="GO:0016829">
    <property type="term" value="F:lyase activity"/>
    <property type="evidence" value="ECO:0007669"/>
    <property type="project" value="UniProtKB-KW"/>
</dbReference>
<dbReference type="GO" id="GO:0000105">
    <property type="term" value="P:L-histidine biosynthetic process"/>
    <property type="evidence" value="ECO:0007669"/>
    <property type="project" value="UniProtKB-UniRule"/>
</dbReference>
<dbReference type="CDD" id="cd04731">
    <property type="entry name" value="HisF"/>
    <property type="match status" value="1"/>
</dbReference>
<dbReference type="Gene3D" id="3.20.20.70">
    <property type="entry name" value="Aldolase class I"/>
    <property type="match status" value="1"/>
</dbReference>
<dbReference type="HAMAP" id="MF_01013">
    <property type="entry name" value="HisF"/>
    <property type="match status" value="1"/>
</dbReference>
<dbReference type="InterPro" id="IPR013785">
    <property type="entry name" value="Aldolase_TIM"/>
</dbReference>
<dbReference type="InterPro" id="IPR006062">
    <property type="entry name" value="His_biosynth"/>
</dbReference>
<dbReference type="InterPro" id="IPR004651">
    <property type="entry name" value="HisF"/>
</dbReference>
<dbReference type="InterPro" id="IPR050064">
    <property type="entry name" value="IGPS_HisA/HisF"/>
</dbReference>
<dbReference type="InterPro" id="IPR011060">
    <property type="entry name" value="RibuloseP-bd_barrel"/>
</dbReference>
<dbReference type="NCBIfam" id="TIGR00735">
    <property type="entry name" value="hisF"/>
    <property type="match status" value="1"/>
</dbReference>
<dbReference type="PANTHER" id="PTHR21235:SF2">
    <property type="entry name" value="IMIDAZOLE GLYCEROL PHOSPHATE SYNTHASE HISHF"/>
    <property type="match status" value="1"/>
</dbReference>
<dbReference type="PANTHER" id="PTHR21235">
    <property type="entry name" value="IMIDAZOLE GLYCEROL PHOSPHATE SYNTHASE SUBUNIT HISF/H IGP SYNTHASE SUBUNIT HISF/H"/>
    <property type="match status" value="1"/>
</dbReference>
<dbReference type="Pfam" id="PF00977">
    <property type="entry name" value="His_biosynth"/>
    <property type="match status" value="1"/>
</dbReference>
<dbReference type="SUPFAM" id="SSF51366">
    <property type="entry name" value="Ribulose-phoshate binding barrel"/>
    <property type="match status" value="1"/>
</dbReference>
<comment type="function">
    <text evidence="1">IGPS catalyzes the conversion of PRFAR and glutamine to IGP, AICAR and glutamate. The HisF subunit catalyzes the cyclization activity that produces IGP and AICAR from PRFAR using the ammonia provided by the HisH subunit.</text>
</comment>
<comment type="catalytic activity">
    <reaction evidence="1">
        <text>5-[(5-phospho-1-deoxy-D-ribulos-1-ylimino)methylamino]-1-(5-phospho-beta-D-ribosyl)imidazole-4-carboxamide + L-glutamine = D-erythro-1-(imidazol-4-yl)glycerol 3-phosphate + 5-amino-1-(5-phospho-beta-D-ribosyl)imidazole-4-carboxamide + L-glutamate + H(+)</text>
        <dbReference type="Rhea" id="RHEA:24793"/>
        <dbReference type="ChEBI" id="CHEBI:15378"/>
        <dbReference type="ChEBI" id="CHEBI:29985"/>
        <dbReference type="ChEBI" id="CHEBI:58278"/>
        <dbReference type="ChEBI" id="CHEBI:58359"/>
        <dbReference type="ChEBI" id="CHEBI:58475"/>
        <dbReference type="ChEBI" id="CHEBI:58525"/>
        <dbReference type="EC" id="4.3.2.10"/>
    </reaction>
</comment>
<comment type="pathway">
    <text evidence="1">Amino-acid biosynthesis; L-histidine biosynthesis; L-histidine from 5-phospho-alpha-D-ribose 1-diphosphate: step 5/9.</text>
</comment>
<comment type="subunit">
    <text evidence="1">Heterodimer of HisH and HisF.</text>
</comment>
<comment type="subcellular location">
    <subcellularLocation>
        <location evidence="1">Cytoplasm</location>
    </subcellularLocation>
</comment>
<comment type="similarity">
    <text evidence="1">Belongs to the HisA/HisF family.</text>
</comment>
<proteinExistence type="inferred from homology"/>
<accession>B8H6U2</accession>
<name>HIS6_PSECP</name>
<sequence length="258" mass="27194">MAVAVRVIPCLDVDAGRVVKGVNFEGLRDAGDPVELAHRYDNAGADELTFLDVTASSGNRETTFDVVRRTAEEVFIPLCVGGGVRGVAEVDKLLRFGADKAAINTAAVARPDVIDEITRHFGSQVLVLSVDARRTRPGSKPTPSGFEVTTHGGRTGTGIDAIEWAKEAADRGVGEILLNSIDADGTKDGFDLEMIRMVRAAVKVPLIASGGAGEPAHFPPAVAAGADAVLAASIFHWGPNDMMHQVKDAIRNAGFEVR</sequence>
<keyword id="KW-0028">Amino-acid biosynthesis</keyword>
<keyword id="KW-0963">Cytoplasm</keyword>
<keyword id="KW-0368">Histidine biosynthesis</keyword>
<keyword id="KW-0456">Lyase</keyword>
<gene>
    <name evidence="1" type="primary">hisF</name>
    <name type="ordered locus">Achl_1676</name>
</gene>
<reference key="1">
    <citation type="submission" date="2009-01" db="EMBL/GenBank/DDBJ databases">
        <title>Complete sequence of chromosome of Arthrobacter chlorophenolicus A6.</title>
        <authorList>
            <consortium name="US DOE Joint Genome Institute"/>
            <person name="Lucas S."/>
            <person name="Copeland A."/>
            <person name="Lapidus A."/>
            <person name="Glavina del Rio T."/>
            <person name="Tice H."/>
            <person name="Bruce D."/>
            <person name="Goodwin L."/>
            <person name="Pitluck S."/>
            <person name="Goltsman E."/>
            <person name="Clum A."/>
            <person name="Larimer F."/>
            <person name="Land M."/>
            <person name="Hauser L."/>
            <person name="Kyrpides N."/>
            <person name="Mikhailova N."/>
            <person name="Jansson J."/>
            <person name="Richardson P."/>
        </authorList>
    </citation>
    <scope>NUCLEOTIDE SEQUENCE [LARGE SCALE GENOMIC DNA]</scope>
    <source>
        <strain>ATCC 700700 / DSM 12829 / CIP 107037 / JCM 12360 / KCTC 9906 / NCIMB 13794 / A6</strain>
    </source>
</reference>
<feature type="chain" id="PRO_1000148900" description="Imidazole glycerol phosphate synthase subunit HisF">
    <location>
        <begin position="1"/>
        <end position="258"/>
    </location>
</feature>
<feature type="active site" evidence="1">
    <location>
        <position position="12"/>
    </location>
</feature>
<feature type="active site" evidence="1">
    <location>
        <position position="131"/>
    </location>
</feature>
<evidence type="ECO:0000255" key="1">
    <source>
        <dbReference type="HAMAP-Rule" id="MF_01013"/>
    </source>
</evidence>